<evidence type="ECO:0000255" key="1">
    <source>
        <dbReference type="HAMAP-Rule" id="MF_01582"/>
    </source>
</evidence>
<evidence type="ECO:0000305" key="2"/>
<reference key="1">
    <citation type="journal article" date="2011" name="Stand. Genomic Sci.">
        <title>Complete genome sequence of the halophilic and highly halotolerant Chromohalobacter salexigens type strain (1H11(T)).</title>
        <authorList>
            <person name="Copeland A."/>
            <person name="O'Connor K."/>
            <person name="Lucas S."/>
            <person name="Lapidus A."/>
            <person name="Berry K.W."/>
            <person name="Detter J.C."/>
            <person name="Del Rio T.G."/>
            <person name="Hammon N."/>
            <person name="Dalin E."/>
            <person name="Tice H."/>
            <person name="Pitluck S."/>
            <person name="Bruce D."/>
            <person name="Goodwin L."/>
            <person name="Han C."/>
            <person name="Tapia R."/>
            <person name="Saunders E."/>
            <person name="Schmutz J."/>
            <person name="Brettin T."/>
            <person name="Larimer F."/>
            <person name="Land M."/>
            <person name="Hauser L."/>
            <person name="Vargas C."/>
            <person name="Nieto J.J."/>
            <person name="Kyrpides N.C."/>
            <person name="Ivanova N."/>
            <person name="Goker M."/>
            <person name="Klenk H.P."/>
            <person name="Csonka L.N."/>
            <person name="Woyke T."/>
        </authorList>
    </citation>
    <scope>NUCLEOTIDE SEQUENCE [LARGE SCALE GENOMIC DNA]</scope>
    <source>
        <strain>ATCC BAA-138 / DSM 3043 / CIP 106854 / NCIMB 13768 / 1H11</strain>
    </source>
</reference>
<accession>Q1QTI8</accession>
<comment type="function">
    <text evidence="1">Involved in the import of serine and threonine into the cell, with the concomitant import of sodium (symport system).</text>
</comment>
<comment type="catalytic activity">
    <reaction evidence="1">
        <text>L-serine(in) + Na(+)(in) = L-serine(out) + Na(+)(out)</text>
        <dbReference type="Rhea" id="RHEA:29575"/>
        <dbReference type="ChEBI" id="CHEBI:29101"/>
        <dbReference type="ChEBI" id="CHEBI:33384"/>
    </reaction>
    <physiologicalReaction direction="right-to-left" evidence="1">
        <dbReference type="Rhea" id="RHEA:29577"/>
    </physiologicalReaction>
</comment>
<comment type="catalytic activity">
    <reaction evidence="1">
        <text>L-threonine(in) + Na(+)(in) = L-threonine(out) + Na(+)(out)</text>
        <dbReference type="Rhea" id="RHEA:69999"/>
        <dbReference type="ChEBI" id="CHEBI:29101"/>
        <dbReference type="ChEBI" id="CHEBI:57926"/>
    </reaction>
    <physiologicalReaction direction="right-to-left" evidence="1">
        <dbReference type="Rhea" id="RHEA:70001"/>
    </physiologicalReaction>
</comment>
<comment type="subcellular location">
    <subcellularLocation>
        <location evidence="1">Cell inner membrane</location>
        <topology evidence="1">Multi-pass membrane protein</topology>
    </subcellularLocation>
</comment>
<comment type="similarity">
    <text evidence="1">Belongs to the dicarboxylate/amino acid:cation symporter (DAACS) (TC 2.A.23) family.</text>
</comment>
<comment type="sequence caution" evidence="2">
    <conflict type="erroneous initiation">
        <sequence resource="EMBL-CDS" id="ABE60220"/>
    </conflict>
</comment>
<organism>
    <name type="scientific">Chromohalobacter salexigens (strain ATCC BAA-138 / DSM 3043 / CIP 106854 / NCIMB 13768 / 1H11)</name>
    <dbReference type="NCBI Taxonomy" id="290398"/>
    <lineage>
        <taxon>Bacteria</taxon>
        <taxon>Pseudomonadati</taxon>
        <taxon>Pseudomonadota</taxon>
        <taxon>Gammaproteobacteria</taxon>
        <taxon>Oceanospirillales</taxon>
        <taxon>Halomonadaceae</taxon>
        <taxon>Chromohalobacter</taxon>
    </lineage>
</organism>
<dbReference type="EMBL" id="CP000285">
    <property type="protein sequence ID" value="ABE60220.1"/>
    <property type="status" value="ALT_INIT"/>
    <property type="molecule type" value="Genomic_DNA"/>
</dbReference>
<dbReference type="RefSeq" id="WP_043558617.1">
    <property type="nucleotide sequence ID" value="NC_007963.1"/>
</dbReference>
<dbReference type="SMR" id="Q1QTI8"/>
<dbReference type="STRING" id="290398.Csal_2874"/>
<dbReference type="GeneID" id="95335569"/>
<dbReference type="KEGG" id="csa:Csal_2874"/>
<dbReference type="eggNOG" id="COG3633">
    <property type="taxonomic scope" value="Bacteria"/>
</dbReference>
<dbReference type="HOGENOM" id="CLU_044581_0_0_6"/>
<dbReference type="OrthoDB" id="9768885at2"/>
<dbReference type="Proteomes" id="UP000000239">
    <property type="component" value="Chromosome"/>
</dbReference>
<dbReference type="GO" id="GO:0005886">
    <property type="term" value="C:plasma membrane"/>
    <property type="evidence" value="ECO:0007669"/>
    <property type="project" value="UniProtKB-SubCell"/>
</dbReference>
<dbReference type="GO" id="GO:0005295">
    <property type="term" value="F:neutral L-amino acid:sodium symporter activity"/>
    <property type="evidence" value="ECO:0007669"/>
    <property type="project" value="TreeGrafter"/>
</dbReference>
<dbReference type="GO" id="GO:0032329">
    <property type="term" value="P:serine transport"/>
    <property type="evidence" value="ECO:0007669"/>
    <property type="project" value="InterPro"/>
</dbReference>
<dbReference type="GO" id="GO:0015826">
    <property type="term" value="P:threonine transport"/>
    <property type="evidence" value="ECO:0007669"/>
    <property type="project" value="InterPro"/>
</dbReference>
<dbReference type="FunFam" id="1.10.3860.10:FF:000003">
    <property type="entry name" value="Serine/threonine transporter sstT"/>
    <property type="match status" value="1"/>
</dbReference>
<dbReference type="Gene3D" id="1.10.3860.10">
    <property type="entry name" value="Sodium:dicarboxylate symporter"/>
    <property type="match status" value="1"/>
</dbReference>
<dbReference type="HAMAP" id="MF_01582">
    <property type="entry name" value="Ser_Thr_transp_SstT"/>
    <property type="match status" value="1"/>
</dbReference>
<dbReference type="InterPro" id="IPR001991">
    <property type="entry name" value="Na-dicarboxylate_symporter"/>
</dbReference>
<dbReference type="InterPro" id="IPR036458">
    <property type="entry name" value="Na:dicarbo_symporter_sf"/>
</dbReference>
<dbReference type="InterPro" id="IPR023025">
    <property type="entry name" value="Ser_Thr_transp_SstT"/>
</dbReference>
<dbReference type="NCBIfam" id="NF010151">
    <property type="entry name" value="PRK13628.1"/>
    <property type="match status" value="1"/>
</dbReference>
<dbReference type="PANTHER" id="PTHR42865">
    <property type="entry name" value="PROTON/GLUTAMATE-ASPARTATE SYMPORTER"/>
    <property type="match status" value="1"/>
</dbReference>
<dbReference type="PANTHER" id="PTHR42865:SF8">
    <property type="entry name" value="SERINE_THREONINE TRANSPORTER SSTT"/>
    <property type="match status" value="1"/>
</dbReference>
<dbReference type="Pfam" id="PF00375">
    <property type="entry name" value="SDF"/>
    <property type="match status" value="1"/>
</dbReference>
<dbReference type="PRINTS" id="PR00173">
    <property type="entry name" value="EDTRNSPORT"/>
</dbReference>
<dbReference type="SUPFAM" id="SSF118215">
    <property type="entry name" value="Proton glutamate symport protein"/>
    <property type="match status" value="1"/>
</dbReference>
<keyword id="KW-0029">Amino-acid transport</keyword>
<keyword id="KW-0997">Cell inner membrane</keyword>
<keyword id="KW-1003">Cell membrane</keyword>
<keyword id="KW-0472">Membrane</keyword>
<keyword id="KW-1185">Reference proteome</keyword>
<keyword id="KW-0769">Symport</keyword>
<keyword id="KW-0812">Transmembrane</keyword>
<keyword id="KW-1133">Transmembrane helix</keyword>
<keyword id="KW-0813">Transport</keyword>
<protein>
    <recommendedName>
        <fullName evidence="1">Serine/threonine transporter SstT</fullName>
    </recommendedName>
    <alternativeName>
        <fullName evidence="1">Na(+)/serine-threonine symporter</fullName>
    </alternativeName>
</protein>
<feature type="chain" id="PRO_0000309080" description="Serine/threonine transporter SstT">
    <location>
        <begin position="1"/>
        <end position="403"/>
    </location>
</feature>
<feature type="transmembrane region" description="Helical" evidence="1">
    <location>
        <begin position="15"/>
        <end position="35"/>
    </location>
</feature>
<feature type="transmembrane region" description="Helical" evidence="1">
    <location>
        <begin position="49"/>
        <end position="69"/>
    </location>
</feature>
<feature type="transmembrane region" description="Helical" evidence="1">
    <location>
        <begin position="85"/>
        <end position="105"/>
    </location>
</feature>
<feature type="transmembrane region" description="Helical" evidence="1">
    <location>
        <begin position="142"/>
        <end position="162"/>
    </location>
</feature>
<feature type="transmembrane region" description="Helical" evidence="1">
    <location>
        <begin position="183"/>
        <end position="203"/>
    </location>
</feature>
<feature type="transmembrane region" description="Helical" evidence="1">
    <location>
        <begin position="218"/>
        <end position="238"/>
    </location>
</feature>
<feature type="transmembrane region" description="Helical" evidence="1">
    <location>
        <begin position="246"/>
        <end position="268"/>
    </location>
</feature>
<feature type="transmembrane region" description="Helical" evidence="1">
    <location>
        <begin position="289"/>
        <end position="309"/>
    </location>
</feature>
<feature type="transmembrane region" description="Helical" evidence="1">
    <location>
        <begin position="317"/>
        <end position="337"/>
    </location>
</feature>
<feature type="transmembrane region" description="Helical" evidence="1">
    <location>
        <begin position="362"/>
        <end position="382"/>
    </location>
</feature>
<proteinExistence type="inferred from homology"/>
<sequence length="403" mass="41420">MSATLASPLRALLRLGLIPQIVIGIALGVGVAIVWPDAATSVALLGQVFISALKAVAPILVFLLVMTAIANHRRGQPTHIRGVLLLYVVGTLCAALVAVLASFIFPTSLVIDAPQASGEPPGGIAEILRNLLLNVVDNPVNALLNANFVGILAWAMGLGMMLRGASETTLVVLNAFSDAVSSIVQLVIRCAPLGIFGLVAGTLADTGLNALLDYAHLLAVIVGCMLFVALVTNPLIVFLATRRNPYPLVFACLRGSAITAFFTRSSAANIPVNMELCKRLDLHPDTYSISIPLGATINMAGAAVTISVITLAATHTLGIGVDFATALLLCVVASLAACGVSGVAGGSLLLIPMAASLFGISPDVAMQVVAIGFVISVVQDATETALNSSTDVLFTAAACRARR</sequence>
<gene>
    <name evidence="1" type="primary">sstT</name>
    <name type="ordered locus">Csal_2874</name>
</gene>
<name>SSTT_CHRSD</name>